<feature type="chain" id="PRO_0000360335" description="NAD(P)H-quinone oxidoreductase subunit 4L, chloroplastic">
    <location>
        <begin position="1"/>
        <end position="101"/>
    </location>
</feature>
<feature type="transmembrane region" description="Helical" evidence="1">
    <location>
        <begin position="2"/>
        <end position="22"/>
    </location>
</feature>
<feature type="transmembrane region" description="Helical" evidence="1">
    <location>
        <begin position="32"/>
        <end position="52"/>
    </location>
</feature>
<feature type="transmembrane region" description="Helical" evidence="1">
    <location>
        <begin position="61"/>
        <end position="81"/>
    </location>
</feature>
<name>NU4LC_ILLOL</name>
<organism>
    <name type="scientific">Illicium oligandrum</name>
    <name type="common">Star anise</name>
    <dbReference type="NCBI Taxonomy" id="145286"/>
    <lineage>
        <taxon>Eukaryota</taxon>
        <taxon>Viridiplantae</taxon>
        <taxon>Streptophyta</taxon>
        <taxon>Embryophyta</taxon>
        <taxon>Tracheophyta</taxon>
        <taxon>Spermatophyta</taxon>
        <taxon>Magnoliopsida</taxon>
        <taxon>Austrobaileyales</taxon>
        <taxon>Schisandraceae</taxon>
        <taxon>Illicium</taxon>
    </lineage>
</organism>
<protein>
    <recommendedName>
        <fullName evidence="1">NAD(P)H-quinone oxidoreductase subunit 4L, chloroplastic</fullName>
        <ecNumber evidence="1">7.1.1.-</ecNumber>
    </recommendedName>
    <alternativeName>
        <fullName evidence="1">NAD(P)H dehydrogenase subunit 4L</fullName>
    </alternativeName>
    <alternativeName>
        <fullName evidence="1">NADH-plastoquinone oxidoreductase subunit 4L</fullName>
    </alternativeName>
</protein>
<reference key="1">
    <citation type="journal article" date="2007" name="Mol. Phylogenet. Evol.">
        <title>Phylogenetic and evolutionary implications of complete chloroplast genome sequences of four early-diverging angiosperms: Buxus (Buxaceae), Chloranthus (Chloranthaceae), Dioscorea (Dioscoreaceae), and Illicium (Schisandraceae).</title>
        <authorList>
            <person name="Hansen D.R."/>
            <person name="Dastidar S.G."/>
            <person name="Cai Z."/>
            <person name="Penaflor C."/>
            <person name="Kuehl J.V."/>
            <person name="Boore J.L."/>
            <person name="Jansen R.K."/>
        </authorList>
    </citation>
    <scope>NUCLEOTIDE SEQUENCE [LARGE SCALE GENOMIC DNA]</scope>
</reference>
<sequence length="101" mass="11191">MMLEHVLVLSAYLFSIGIYGLITSRNMVRALMCLELILNAVNINLVTFSDLFDSRQLKGDIFSIFVIAIAAAEAAIGPAIVSSIYRNRKSTRINQSNLLNK</sequence>
<proteinExistence type="inferred from homology"/>
<geneLocation type="chloroplast"/>
<keyword id="KW-0150">Chloroplast</keyword>
<keyword id="KW-0472">Membrane</keyword>
<keyword id="KW-0520">NAD</keyword>
<keyword id="KW-0521">NADP</keyword>
<keyword id="KW-0934">Plastid</keyword>
<keyword id="KW-0618">Plastoquinone</keyword>
<keyword id="KW-0874">Quinone</keyword>
<keyword id="KW-0793">Thylakoid</keyword>
<keyword id="KW-1278">Translocase</keyword>
<keyword id="KW-0812">Transmembrane</keyword>
<keyword id="KW-1133">Transmembrane helix</keyword>
<keyword id="KW-0813">Transport</keyword>
<gene>
    <name evidence="1" type="primary">ndhE</name>
</gene>
<accession>A6MMZ7</accession>
<dbReference type="EC" id="7.1.1.-" evidence="1"/>
<dbReference type="EMBL" id="EF380354">
    <property type="protein sequence ID" value="ABQ52572.1"/>
    <property type="molecule type" value="Genomic_DNA"/>
</dbReference>
<dbReference type="RefSeq" id="YP_001294323.1">
    <property type="nucleotide sequence ID" value="NC_009600.1"/>
</dbReference>
<dbReference type="SMR" id="A6MMZ7"/>
<dbReference type="GeneID" id="5236713"/>
<dbReference type="GO" id="GO:0009535">
    <property type="term" value="C:chloroplast thylakoid membrane"/>
    <property type="evidence" value="ECO:0007669"/>
    <property type="project" value="UniProtKB-SubCell"/>
</dbReference>
<dbReference type="GO" id="GO:0030964">
    <property type="term" value="C:NADH dehydrogenase complex"/>
    <property type="evidence" value="ECO:0007669"/>
    <property type="project" value="TreeGrafter"/>
</dbReference>
<dbReference type="GO" id="GO:0016655">
    <property type="term" value="F:oxidoreductase activity, acting on NAD(P)H, quinone or similar compound as acceptor"/>
    <property type="evidence" value="ECO:0007669"/>
    <property type="project" value="UniProtKB-UniRule"/>
</dbReference>
<dbReference type="GO" id="GO:0048038">
    <property type="term" value="F:quinone binding"/>
    <property type="evidence" value="ECO:0007669"/>
    <property type="project" value="UniProtKB-KW"/>
</dbReference>
<dbReference type="GO" id="GO:0042773">
    <property type="term" value="P:ATP synthesis coupled electron transport"/>
    <property type="evidence" value="ECO:0007669"/>
    <property type="project" value="InterPro"/>
</dbReference>
<dbReference type="GO" id="GO:0019684">
    <property type="term" value="P:photosynthesis, light reaction"/>
    <property type="evidence" value="ECO:0007669"/>
    <property type="project" value="UniProtKB-UniRule"/>
</dbReference>
<dbReference type="FunFam" id="1.10.287.3510:FF:000001">
    <property type="entry name" value="NADH-quinone oxidoreductase subunit K"/>
    <property type="match status" value="1"/>
</dbReference>
<dbReference type="Gene3D" id="1.10.287.3510">
    <property type="match status" value="1"/>
</dbReference>
<dbReference type="HAMAP" id="MF_01456">
    <property type="entry name" value="NDH1_NuoK"/>
    <property type="match status" value="1"/>
</dbReference>
<dbReference type="InterPro" id="IPR001133">
    <property type="entry name" value="NADH_UbQ_OxRdtase_chain4L/K"/>
</dbReference>
<dbReference type="InterPro" id="IPR039428">
    <property type="entry name" value="NUOK/Mnh_C1-like"/>
</dbReference>
<dbReference type="NCBIfam" id="NF004320">
    <property type="entry name" value="PRK05715.1-2"/>
    <property type="match status" value="1"/>
</dbReference>
<dbReference type="NCBIfam" id="NF004322">
    <property type="entry name" value="PRK05715.1-4"/>
    <property type="match status" value="1"/>
</dbReference>
<dbReference type="PANTHER" id="PTHR11434:SF16">
    <property type="entry name" value="NADH-UBIQUINONE OXIDOREDUCTASE CHAIN 4L"/>
    <property type="match status" value="1"/>
</dbReference>
<dbReference type="PANTHER" id="PTHR11434">
    <property type="entry name" value="NADH-UBIQUINONE OXIDOREDUCTASE SUBUNIT ND4L"/>
    <property type="match status" value="1"/>
</dbReference>
<dbReference type="Pfam" id="PF00420">
    <property type="entry name" value="Oxidored_q2"/>
    <property type="match status" value="1"/>
</dbReference>
<comment type="function">
    <text evidence="1">NDH shuttles electrons from NAD(P)H:plastoquinone, via FMN and iron-sulfur (Fe-S) centers, to quinones in the photosynthetic chain and possibly in a chloroplast respiratory chain. The immediate electron acceptor for the enzyme in this species is believed to be plastoquinone. Couples the redox reaction to proton translocation, and thus conserves the redox energy in a proton gradient.</text>
</comment>
<comment type="catalytic activity">
    <reaction evidence="1">
        <text>a plastoquinone + NADH + (n+1) H(+)(in) = a plastoquinol + NAD(+) + n H(+)(out)</text>
        <dbReference type="Rhea" id="RHEA:42608"/>
        <dbReference type="Rhea" id="RHEA-COMP:9561"/>
        <dbReference type="Rhea" id="RHEA-COMP:9562"/>
        <dbReference type="ChEBI" id="CHEBI:15378"/>
        <dbReference type="ChEBI" id="CHEBI:17757"/>
        <dbReference type="ChEBI" id="CHEBI:57540"/>
        <dbReference type="ChEBI" id="CHEBI:57945"/>
        <dbReference type="ChEBI" id="CHEBI:62192"/>
    </reaction>
</comment>
<comment type="catalytic activity">
    <reaction evidence="1">
        <text>a plastoquinone + NADPH + (n+1) H(+)(in) = a plastoquinol + NADP(+) + n H(+)(out)</text>
        <dbReference type="Rhea" id="RHEA:42612"/>
        <dbReference type="Rhea" id="RHEA-COMP:9561"/>
        <dbReference type="Rhea" id="RHEA-COMP:9562"/>
        <dbReference type="ChEBI" id="CHEBI:15378"/>
        <dbReference type="ChEBI" id="CHEBI:17757"/>
        <dbReference type="ChEBI" id="CHEBI:57783"/>
        <dbReference type="ChEBI" id="CHEBI:58349"/>
        <dbReference type="ChEBI" id="CHEBI:62192"/>
    </reaction>
</comment>
<comment type="subunit">
    <text evidence="1">NDH is composed of at least 16 different subunits, 5 of which are encoded in the nucleus.</text>
</comment>
<comment type="subcellular location">
    <subcellularLocation>
        <location evidence="1">Plastid</location>
        <location evidence="1">Chloroplast thylakoid membrane</location>
        <topology evidence="1">Multi-pass membrane protein</topology>
    </subcellularLocation>
</comment>
<comment type="similarity">
    <text evidence="1">Belongs to the complex I subunit 4L family.</text>
</comment>
<evidence type="ECO:0000255" key="1">
    <source>
        <dbReference type="HAMAP-Rule" id="MF_01456"/>
    </source>
</evidence>